<feature type="chain" id="PRO_0000366141" description="Seco-amyrin synthase">
    <location>
        <begin position="1"/>
        <end position="767"/>
    </location>
</feature>
<feature type="repeat" description="PFTB 1">
    <location>
        <begin position="149"/>
        <end position="190"/>
    </location>
</feature>
<feature type="repeat" description="PFTB 2">
    <location>
        <begin position="598"/>
        <end position="638"/>
    </location>
</feature>
<feature type="repeat" description="PFTB 3">
    <location>
        <begin position="647"/>
        <end position="688"/>
    </location>
</feature>
<feature type="active site" description="Proton donor" evidence="1">
    <location>
        <position position="492"/>
    </location>
</feature>
<dbReference type="EC" id="5.4.99.52"/>
<dbReference type="EC" id="5.4.99.54"/>
<dbReference type="EMBL" id="AC007260">
    <property type="protein sequence ID" value="AAD30585.1"/>
    <property type="molecule type" value="Genomic_DNA"/>
</dbReference>
<dbReference type="EMBL" id="CP002684">
    <property type="protein sequence ID" value="AEE36113.1"/>
    <property type="molecule type" value="Genomic_DNA"/>
</dbReference>
<dbReference type="EMBL" id="CP002684">
    <property type="protein sequence ID" value="ANM60176.1"/>
    <property type="molecule type" value="Genomic_DNA"/>
</dbReference>
<dbReference type="EMBL" id="AB274959">
    <property type="protein sequence ID" value="BAF80447.1"/>
    <property type="molecule type" value="mRNA"/>
</dbReference>
<dbReference type="PIR" id="E96813">
    <property type="entry name" value="E96813"/>
</dbReference>
<dbReference type="RefSeq" id="NP_001322480.1">
    <property type="nucleotide sequence ID" value="NM_001334828.1"/>
</dbReference>
<dbReference type="RefSeq" id="NP_177971.1">
    <property type="nucleotide sequence ID" value="NM_106497.1"/>
</dbReference>
<dbReference type="SMR" id="Q9SYN1"/>
<dbReference type="FunCoup" id="Q9SYN1">
    <property type="interactions" value="704"/>
</dbReference>
<dbReference type="STRING" id="3702.Q9SYN1"/>
<dbReference type="PaxDb" id="3702-AT1G78500.1"/>
<dbReference type="ProteomicsDB" id="236408"/>
<dbReference type="EnsemblPlants" id="AT1G78500.1">
    <property type="protein sequence ID" value="AT1G78500.1"/>
    <property type="gene ID" value="AT1G78500"/>
</dbReference>
<dbReference type="EnsemblPlants" id="AT1G78500.2">
    <property type="protein sequence ID" value="AT1G78500.2"/>
    <property type="gene ID" value="AT1G78500"/>
</dbReference>
<dbReference type="GeneID" id="844186"/>
<dbReference type="Gramene" id="AT1G78500.1">
    <property type="protein sequence ID" value="AT1G78500.1"/>
    <property type="gene ID" value="AT1G78500"/>
</dbReference>
<dbReference type="Gramene" id="AT1G78500.2">
    <property type="protein sequence ID" value="AT1G78500.2"/>
    <property type="gene ID" value="AT1G78500"/>
</dbReference>
<dbReference type="KEGG" id="ath:AT1G78500"/>
<dbReference type="Araport" id="AT1G78500"/>
<dbReference type="TAIR" id="AT1G78500">
    <property type="gene designation" value="PEN6"/>
</dbReference>
<dbReference type="eggNOG" id="KOG0497">
    <property type="taxonomic scope" value="Eukaryota"/>
</dbReference>
<dbReference type="HOGENOM" id="CLU_009074_2_0_1"/>
<dbReference type="InParanoid" id="Q9SYN1"/>
<dbReference type="OMA" id="QNCEPIR"/>
<dbReference type="PhylomeDB" id="Q9SYN1"/>
<dbReference type="BioCyc" id="ARA:AT1G78500-MONOMER"/>
<dbReference type="PRO" id="PR:Q9SYN1"/>
<dbReference type="Proteomes" id="UP000006548">
    <property type="component" value="Chromosome 1"/>
</dbReference>
<dbReference type="ExpressionAtlas" id="Q9SYN1">
    <property type="expression patterns" value="baseline and differential"/>
</dbReference>
<dbReference type="GO" id="GO:0005811">
    <property type="term" value="C:lipid droplet"/>
    <property type="evidence" value="ECO:0007669"/>
    <property type="project" value="InterPro"/>
</dbReference>
<dbReference type="GO" id="GO:0042299">
    <property type="term" value="F:lupeol synthase activity"/>
    <property type="evidence" value="ECO:0000304"/>
    <property type="project" value="TAIR"/>
</dbReference>
<dbReference type="GO" id="GO:0031559">
    <property type="term" value="F:oxidosqualene cyclase activity"/>
    <property type="evidence" value="ECO:0000314"/>
    <property type="project" value="TAIR"/>
</dbReference>
<dbReference type="GO" id="GO:0016104">
    <property type="term" value="P:triterpenoid biosynthetic process"/>
    <property type="evidence" value="ECO:0007669"/>
    <property type="project" value="InterPro"/>
</dbReference>
<dbReference type="CDD" id="cd02892">
    <property type="entry name" value="SQCY_1"/>
    <property type="match status" value="1"/>
</dbReference>
<dbReference type="FunFam" id="1.50.10.20:FF:000011">
    <property type="entry name" value="Terpene cyclase/mutase family member"/>
    <property type="match status" value="1"/>
</dbReference>
<dbReference type="Gene3D" id="1.50.10.20">
    <property type="match status" value="2"/>
</dbReference>
<dbReference type="InterPro" id="IPR032696">
    <property type="entry name" value="SQ_cyclase_C"/>
</dbReference>
<dbReference type="InterPro" id="IPR032697">
    <property type="entry name" value="SQ_cyclase_N"/>
</dbReference>
<dbReference type="InterPro" id="IPR018333">
    <property type="entry name" value="Squalene_cyclase"/>
</dbReference>
<dbReference type="InterPro" id="IPR002365">
    <property type="entry name" value="Terpene_synthase_CS"/>
</dbReference>
<dbReference type="InterPro" id="IPR008930">
    <property type="entry name" value="Terpenoid_cyclase/PrenylTrfase"/>
</dbReference>
<dbReference type="NCBIfam" id="TIGR01787">
    <property type="entry name" value="squalene_cyclas"/>
    <property type="match status" value="1"/>
</dbReference>
<dbReference type="PANTHER" id="PTHR11764:SF49">
    <property type="entry name" value="ARABIDIOL SYNTHASE-RELATED"/>
    <property type="match status" value="1"/>
</dbReference>
<dbReference type="PANTHER" id="PTHR11764">
    <property type="entry name" value="TERPENE CYCLASE/MUTASE FAMILY MEMBER"/>
    <property type="match status" value="1"/>
</dbReference>
<dbReference type="Pfam" id="PF13243">
    <property type="entry name" value="SQHop_cyclase_C"/>
    <property type="match status" value="1"/>
</dbReference>
<dbReference type="Pfam" id="PF13249">
    <property type="entry name" value="SQHop_cyclase_N"/>
    <property type="match status" value="1"/>
</dbReference>
<dbReference type="SFLD" id="SFLDG01016">
    <property type="entry name" value="Prenyltransferase_Like_2"/>
    <property type="match status" value="1"/>
</dbReference>
<dbReference type="SUPFAM" id="SSF48239">
    <property type="entry name" value="Terpenoid cyclases/Protein prenyltransferases"/>
    <property type="match status" value="2"/>
</dbReference>
<dbReference type="PROSITE" id="PS01074">
    <property type="entry name" value="TERPENE_SYNTHASES"/>
    <property type="match status" value="1"/>
</dbReference>
<protein>
    <recommendedName>
        <fullName>Seco-amyrin synthase</fullName>
        <ecNumber>5.4.99.52</ecNumber>
        <ecNumber>5.4.99.54</ecNumber>
    </recommendedName>
    <alternativeName>
        <fullName>Alpha-seco-amyrin synthase</fullName>
    </alternativeName>
    <alternativeName>
        <fullName>Beta-seco-amyrin synthase</fullName>
    </alternativeName>
    <alternativeName>
        <fullName>Pentacyclic triterpene synthase 6</fullName>
        <shortName>AtPEN6</shortName>
    </alternativeName>
</protein>
<gene>
    <name type="primary">PEN6</name>
    <name type="ordered locus">At1g78500</name>
    <name type="ORF">T30F21.16</name>
</gene>
<name>PEN6_ARATH</name>
<sequence length="767" mass="88447">MWRLKIGAKGGDETHLFTTNNYTGRQTWEFDADACSPEELAEVDEARQNFSINRSRFKISADLLWRMQFLREKKFEQKIPRVEIGDAENITYKDAKTALRRGILYFKALQAEDGHWPAENSGCLFFEAPFVICLYITGHLEKILTLEHRKELLRYMYNHQNEDGGWGIHVEGQSAMFCTVINYICLRILGVEADLDDIKGSGCARARKWILDHGGATYTPLIGKAWLSILGVYDWSGCKPIPPEVWMLPTFSPFNGGTLWIYFRDIFMGVSYLYGKKFVATPTPLILQLREELYPQPYDKILWSQARNQCAKEDLYYPQSFLQEMFWKCVHILSENILNRWPCNKLIRQKALRTTMELLHYQDEASRYFTGGCVPKPFHMLACWVEDPDGDYFKKHLARVPDYIWIGEDGLKIQSFGSQLWDTAFSLQVMLAYQDVDDDDDEIRSTLIKGYSFLNKSQLTQNPPGDHRKMLKDIAKGGWTFSDQDQGWPVSDCTAESLECCLVFGSMPSELIGEKMDVERLYDAVNLLLYFQSKNGGITVWEAARGRTWLEWLSPVEFMEDTIVEHEYVECTGSAIVALARFLKEFPEHRREEVEKFIKNAVKYIESFQMPDGSWYGNWGVCFMYGTFFAVRGLVAAGKTYQNCEPIRKAVQFILETQNVEGGWGESYLSCPNKKYTLLEGNRTNVVNTGQALMVLIMGGQMERDPLPVHRAAKVLINSQLDNGDFPQEEIMGVFKMNVMVHYATYRNIFTLWALTYYTKALRVPLC</sequence>
<accession>Q9SYN1</accession>
<proteinExistence type="evidence at protein level"/>
<reference key="1">
    <citation type="journal article" date="2000" name="Nature">
        <title>Sequence and analysis of chromosome 1 of the plant Arabidopsis thaliana.</title>
        <authorList>
            <person name="Theologis A."/>
            <person name="Ecker J.R."/>
            <person name="Palm C.J."/>
            <person name="Federspiel N.A."/>
            <person name="Kaul S."/>
            <person name="White O."/>
            <person name="Alonso J."/>
            <person name="Altafi H."/>
            <person name="Araujo R."/>
            <person name="Bowman C.L."/>
            <person name="Brooks S.Y."/>
            <person name="Buehler E."/>
            <person name="Chan A."/>
            <person name="Chao Q."/>
            <person name="Chen H."/>
            <person name="Cheuk R.F."/>
            <person name="Chin C.W."/>
            <person name="Chung M.K."/>
            <person name="Conn L."/>
            <person name="Conway A.B."/>
            <person name="Conway A.R."/>
            <person name="Creasy T.H."/>
            <person name="Dewar K."/>
            <person name="Dunn P."/>
            <person name="Etgu P."/>
            <person name="Feldblyum T.V."/>
            <person name="Feng J.-D."/>
            <person name="Fong B."/>
            <person name="Fujii C.Y."/>
            <person name="Gill J.E."/>
            <person name="Goldsmith A.D."/>
            <person name="Haas B."/>
            <person name="Hansen N.F."/>
            <person name="Hughes B."/>
            <person name="Huizar L."/>
            <person name="Hunter J.L."/>
            <person name="Jenkins J."/>
            <person name="Johnson-Hopson C."/>
            <person name="Khan S."/>
            <person name="Khaykin E."/>
            <person name="Kim C.J."/>
            <person name="Koo H.L."/>
            <person name="Kremenetskaia I."/>
            <person name="Kurtz D.B."/>
            <person name="Kwan A."/>
            <person name="Lam B."/>
            <person name="Langin-Hooper S."/>
            <person name="Lee A."/>
            <person name="Lee J.M."/>
            <person name="Lenz C.A."/>
            <person name="Li J.H."/>
            <person name="Li Y.-P."/>
            <person name="Lin X."/>
            <person name="Liu S.X."/>
            <person name="Liu Z.A."/>
            <person name="Luros J.S."/>
            <person name="Maiti R."/>
            <person name="Marziali A."/>
            <person name="Militscher J."/>
            <person name="Miranda M."/>
            <person name="Nguyen M."/>
            <person name="Nierman W.C."/>
            <person name="Osborne B.I."/>
            <person name="Pai G."/>
            <person name="Peterson J."/>
            <person name="Pham P.K."/>
            <person name="Rizzo M."/>
            <person name="Rooney T."/>
            <person name="Rowley D."/>
            <person name="Sakano H."/>
            <person name="Salzberg S.L."/>
            <person name="Schwartz J.R."/>
            <person name="Shinn P."/>
            <person name="Southwick A.M."/>
            <person name="Sun H."/>
            <person name="Tallon L.J."/>
            <person name="Tambunga G."/>
            <person name="Toriumi M.J."/>
            <person name="Town C.D."/>
            <person name="Utterback T."/>
            <person name="Van Aken S."/>
            <person name="Vaysberg M."/>
            <person name="Vysotskaia V.S."/>
            <person name="Walker M."/>
            <person name="Wu D."/>
            <person name="Yu G."/>
            <person name="Fraser C.M."/>
            <person name="Venter J.C."/>
            <person name="Davis R.W."/>
        </authorList>
    </citation>
    <scope>NUCLEOTIDE SEQUENCE [LARGE SCALE GENOMIC DNA]</scope>
    <source>
        <strain>cv. Columbia</strain>
    </source>
</reference>
<reference key="2">
    <citation type="journal article" date="2017" name="Plant J.">
        <title>Araport11: a complete reannotation of the Arabidopsis thaliana reference genome.</title>
        <authorList>
            <person name="Cheng C.Y."/>
            <person name="Krishnakumar V."/>
            <person name="Chan A.P."/>
            <person name="Thibaud-Nissen F."/>
            <person name="Schobel S."/>
            <person name="Town C.D."/>
        </authorList>
    </citation>
    <scope>GENOME REANNOTATION</scope>
    <source>
        <strain>cv. Columbia</strain>
    </source>
</reference>
<reference key="3">
    <citation type="journal article" date="2007" name="J. Am. Chem. Soc.">
        <title>Origin of structural diversity in natural triterpenes: direct synthesis of seco-triterpene skeletons by oxidosqualene cyclase.</title>
        <authorList>
            <person name="Shibuya M."/>
            <person name="Xiang T."/>
            <person name="Katsube Y."/>
            <person name="Otsuka M."/>
            <person name="Zhang H."/>
            <person name="Ebizuka Y."/>
        </authorList>
    </citation>
    <scope>NUCLEOTIDE SEQUENCE [MRNA]</scope>
    <scope>FUNCTION</scope>
    <scope>CATALYTIC ACTIVITY</scope>
</reference>
<reference key="4">
    <citation type="journal article" date="2001" name="Plant Mol. Biol.">
        <title>Molecular cloning and expression in yeast of 2,3-oxidosqualene-triterpenoid cyclases from Arabidopsis thaliana.</title>
        <authorList>
            <person name="Husselstein-Muller T."/>
            <person name="Schaller H."/>
            <person name="Benveniste P."/>
        </authorList>
    </citation>
    <scope>IDENTIFICATION</scope>
    <scope>NOMENCLATURE</scope>
</reference>
<reference key="5">
    <citation type="journal article" date="2003" name="Pure Appl. Chem.">
        <title>Functional genomics approach to the study of triterpene biosynthesis.</title>
        <authorList>
            <person name="Ebizuka Y."/>
            <person name="Katsube Y."/>
            <person name="Tsutsumi T."/>
            <person name="Kushiro T."/>
            <person name="Shibuya M."/>
        </authorList>
    </citation>
    <scope>FUNCTION</scope>
</reference>
<comment type="function">
    <text evidence="2 3">Multifunctional enzyme that converts oxidosqualene to lupeol, bauerenol, alpha-amyrin, taraxasterol, psi-taraxasterol, multiflorenol, alpha-seco-amyrin and beta-seco-amyrin.</text>
</comment>
<comment type="catalytic activity">
    <reaction evidence="2">
        <text>(S)-2,3-epoxysqualene = alpha-seco-amyrin</text>
        <dbReference type="Rhea" id="RHEA:31871"/>
        <dbReference type="ChEBI" id="CHEBI:15441"/>
        <dbReference type="ChEBI" id="CHEBI:63464"/>
        <dbReference type="EC" id="5.4.99.52"/>
    </reaction>
</comment>
<comment type="catalytic activity">
    <reaction evidence="2">
        <text>(S)-2,3-epoxysqualene = beta-seco-amyrin</text>
        <dbReference type="Rhea" id="RHEA:31879"/>
        <dbReference type="ChEBI" id="CHEBI:15441"/>
        <dbReference type="ChEBI" id="CHEBI:63466"/>
        <dbReference type="EC" id="5.4.99.54"/>
    </reaction>
</comment>
<comment type="similarity">
    <text evidence="4">Belongs to the terpene cyclase/mutase family.</text>
</comment>
<organism>
    <name type="scientific">Arabidopsis thaliana</name>
    <name type="common">Mouse-ear cress</name>
    <dbReference type="NCBI Taxonomy" id="3702"/>
    <lineage>
        <taxon>Eukaryota</taxon>
        <taxon>Viridiplantae</taxon>
        <taxon>Streptophyta</taxon>
        <taxon>Embryophyta</taxon>
        <taxon>Tracheophyta</taxon>
        <taxon>Spermatophyta</taxon>
        <taxon>Magnoliopsida</taxon>
        <taxon>eudicotyledons</taxon>
        <taxon>Gunneridae</taxon>
        <taxon>Pentapetalae</taxon>
        <taxon>rosids</taxon>
        <taxon>malvids</taxon>
        <taxon>Brassicales</taxon>
        <taxon>Brassicaceae</taxon>
        <taxon>Camelineae</taxon>
        <taxon>Arabidopsis</taxon>
    </lineage>
</organism>
<evidence type="ECO:0000250" key="1">
    <source>
        <dbReference type="UniProtKB" id="P48449"/>
    </source>
</evidence>
<evidence type="ECO:0000269" key="2">
    <source>
    </source>
</evidence>
<evidence type="ECO:0000269" key="3">
    <source ref="5"/>
</evidence>
<evidence type="ECO:0000305" key="4"/>
<keyword id="KW-0413">Isomerase</keyword>
<keyword id="KW-1185">Reference proteome</keyword>
<keyword id="KW-0677">Repeat</keyword>